<name>MURA_TRIV2</name>
<keyword id="KW-0131">Cell cycle</keyword>
<keyword id="KW-0132">Cell division</keyword>
<keyword id="KW-0133">Cell shape</keyword>
<keyword id="KW-0961">Cell wall biogenesis/degradation</keyword>
<keyword id="KW-0963">Cytoplasm</keyword>
<keyword id="KW-0573">Peptidoglycan synthesis</keyword>
<keyword id="KW-0670">Pyruvate</keyword>
<keyword id="KW-0808">Transferase</keyword>
<accession>Q3MD78</accession>
<feature type="chain" id="PRO_0000231149" description="UDP-N-acetylglucosamine 1-carboxyvinyltransferase">
    <location>
        <begin position="1"/>
        <end position="447"/>
    </location>
</feature>
<feature type="active site" description="Proton donor" evidence="1">
    <location>
        <position position="121"/>
    </location>
</feature>
<feature type="binding site" evidence="1">
    <location>
        <begin position="27"/>
        <end position="28"/>
    </location>
    <ligand>
        <name>phosphoenolpyruvate</name>
        <dbReference type="ChEBI" id="CHEBI:58702"/>
    </ligand>
</feature>
<feature type="binding site" evidence="1">
    <location>
        <position position="97"/>
    </location>
    <ligand>
        <name>UDP-N-acetyl-alpha-D-glucosamine</name>
        <dbReference type="ChEBI" id="CHEBI:57705"/>
    </ligand>
</feature>
<feature type="binding site" evidence="1">
    <location>
        <begin position="126"/>
        <end position="130"/>
    </location>
    <ligand>
        <name>UDP-N-acetyl-alpha-D-glucosamine</name>
        <dbReference type="ChEBI" id="CHEBI:57705"/>
    </ligand>
</feature>
<feature type="binding site" evidence="1">
    <location>
        <position position="314"/>
    </location>
    <ligand>
        <name>UDP-N-acetyl-alpha-D-glucosamine</name>
        <dbReference type="ChEBI" id="CHEBI:57705"/>
    </ligand>
</feature>
<feature type="binding site" evidence="1">
    <location>
        <position position="336"/>
    </location>
    <ligand>
        <name>UDP-N-acetyl-alpha-D-glucosamine</name>
        <dbReference type="ChEBI" id="CHEBI:57705"/>
    </ligand>
</feature>
<feature type="modified residue" description="2-(S-cysteinyl)pyruvic acid O-phosphothioketal" evidence="1">
    <location>
        <position position="121"/>
    </location>
</feature>
<organism>
    <name type="scientific">Trichormus variabilis (strain ATCC 29413 / PCC 7937)</name>
    <name type="common">Anabaena variabilis</name>
    <dbReference type="NCBI Taxonomy" id="240292"/>
    <lineage>
        <taxon>Bacteria</taxon>
        <taxon>Bacillati</taxon>
        <taxon>Cyanobacteriota</taxon>
        <taxon>Cyanophyceae</taxon>
        <taxon>Nostocales</taxon>
        <taxon>Nostocaceae</taxon>
        <taxon>Trichormus</taxon>
    </lineage>
</organism>
<evidence type="ECO:0000255" key="1">
    <source>
        <dbReference type="HAMAP-Rule" id="MF_00111"/>
    </source>
</evidence>
<gene>
    <name evidence="1" type="primary">murA</name>
    <name type="ordered locus">Ava_1435</name>
</gene>
<sequence length="447" mass="46988">MPEADSSVLQIWGGHPLRGHVKISGAKNSALVIMAGALLCSGDCRIRNVPLLADVERMGEVISALGVRLTRQADIIDINASEIKTSKAPYELVTQLRASFFAIGAILARLGVAQMPLPGGCAIGARPVDLHVRGLQAMGAEVQIEHGICNAYVPGSGGRLKGAKIYLDTPSVGATETLMMAATLADGETILENAAREPEVVDLANFCKAMGANIQGAGTSTITIVGVPKLHSVDYSIIPDRIEAGTFLVAGAITRSEITLSSVVPDHLIPLIAKLRDIGVTIIEESPDCLRILPAEILKATDIDTLPHPGFPTDMQAPFMALLTLAEGDSIINESVFENRLRHASELNRLGADIRVKGNTAFVRGVPILSGAPVIGTDLRASAALVIAGLAAEGKTTIQGLHHLDRGYDQIDVKLQQLGAKILRVREEPANAEVAANNNASPAPIST</sequence>
<dbReference type="EC" id="2.5.1.7" evidence="1"/>
<dbReference type="EMBL" id="CP000117">
    <property type="protein sequence ID" value="ABA21058.1"/>
    <property type="molecule type" value="Genomic_DNA"/>
</dbReference>
<dbReference type="SMR" id="Q3MD78"/>
<dbReference type="STRING" id="240292.Ava_1435"/>
<dbReference type="KEGG" id="ava:Ava_1435"/>
<dbReference type="eggNOG" id="COG0766">
    <property type="taxonomic scope" value="Bacteria"/>
</dbReference>
<dbReference type="HOGENOM" id="CLU_027387_0_0_3"/>
<dbReference type="UniPathway" id="UPA00219"/>
<dbReference type="Proteomes" id="UP000002533">
    <property type="component" value="Chromosome"/>
</dbReference>
<dbReference type="GO" id="GO:0005737">
    <property type="term" value="C:cytoplasm"/>
    <property type="evidence" value="ECO:0007669"/>
    <property type="project" value="UniProtKB-SubCell"/>
</dbReference>
<dbReference type="GO" id="GO:0008760">
    <property type="term" value="F:UDP-N-acetylglucosamine 1-carboxyvinyltransferase activity"/>
    <property type="evidence" value="ECO:0007669"/>
    <property type="project" value="UniProtKB-UniRule"/>
</dbReference>
<dbReference type="GO" id="GO:0051301">
    <property type="term" value="P:cell division"/>
    <property type="evidence" value="ECO:0007669"/>
    <property type="project" value="UniProtKB-KW"/>
</dbReference>
<dbReference type="GO" id="GO:0071555">
    <property type="term" value="P:cell wall organization"/>
    <property type="evidence" value="ECO:0007669"/>
    <property type="project" value="UniProtKB-KW"/>
</dbReference>
<dbReference type="GO" id="GO:0009252">
    <property type="term" value="P:peptidoglycan biosynthetic process"/>
    <property type="evidence" value="ECO:0007669"/>
    <property type="project" value="UniProtKB-UniRule"/>
</dbReference>
<dbReference type="GO" id="GO:0008360">
    <property type="term" value="P:regulation of cell shape"/>
    <property type="evidence" value="ECO:0007669"/>
    <property type="project" value="UniProtKB-KW"/>
</dbReference>
<dbReference type="GO" id="GO:0019277">
    <property type="term" value="P:UDP-N-acetylgalactosamine biosynthetic process"/>
    <property type="evidence" value="ECO:0007669"/>
    <property type="project" value="InterPro"/>
</dbReference>
<dbReference type="CDD" id="cd01555">
    <property type="entry name" value="UdpNAET"/>
    <property type="match status" value="1"/>
</dbReference>
<dbReference type="FunFam" id="3.65.10.10:FF:000001">
    <property type="entry name" value="UDP-N-acetylglucosamine 1-carboxyvinyltransferase"/>
    <property type="match status" value="1"/>
</dbReference>
<dbReference type="Gene3D" id="3.65.10.10">
    <property type="entry name" value="Enolpyruvate transferase domain"/>
    <property type="match status" value="2"/>
</dbReference>
<dbReference type="HAMAP" id="MF_00111">
    <property type="entry name" value="MurA"/>
    <property type="match status" value="1"/>
</dbReference>
<dbReference type="InterPro" id="IPR001986">
    <property type="entry name" value="Enolpyruvate_Tfrase_dom"/>
</dbReference>
<dbReference type="InterPro" id="IPR036968">
    <property type="entry name" value="Enolpyruvate_Tfrase_sf"/>
</dbReference>
<dbReference type="InterPro" id="IPR050068">
    <property type="entry name" value="MurA_subfamily"/>
</dbReference>
<dbReference type="InterPro" id="IPR013792">
    <property type="entry name" value="RNA3'P_cycl/enolpyr_Trfase_a/b"/>
</dbReference>
<dbReference type="InterPro" id="IPR005750">
    <property type="entry name" value="UDP_GlcNAc_COvinyl_MurA"/>
</dbReference>
<dbReference type="NCBIfam" id="TIGR01072">
    <property type="entry name" value="murA"/>
    <property type="match status" value="1"/>
</dbReference>
<dbReference type="NCBIfam" id="NF006873">
    <property type="entry name" value="PRK09369.1"/>
    <property type="match status" value="1"/>
</dbReference>
<dbReference type="PANTHER" id="PTHR43783">
    <property type="entry name" value="UDP-N-ACETYLGLUCOSAMINE 1-CARBOXYVINYLTRANSFERASE"/>
    <property type="match status" value="1"/>
</dbReference>
<dbReference type="PANTHER" id="PTHR43783:SF1">
    <property type="entry name" value="UDP-N-ACETYLGLUCOSAMINE 1-CARBOXYVINYLTRANSFERASE"/>
    <property type="match status" value="1"/>
</dbReference>
<dbReference type="Pfam" id="PF00275">
    <property type="entry name" value="EPSP_synthase"/>
    <property type="match status" value="1"/>
</dbReference>
<dbReference type="SUPFAM" id="SSF55205">
    <property type="entry name" value="EPT/RTPC-like"/>
    <property type="match status" value="1"/>
</dbReference>
<protein>
    <recommendedName>
        <fullName evidence="1">UDP-N-acetylglucosamine 1-carboxyvinyltransferase</fullName>
        <ecNumber evidence="1">2.5.1.7</ecNumber>
    </recommendedName>
    <alternativeName>
        <fullName evidence="1">Enoylpyruvate transferase</fullName>
    </alternativeName>
    <alternativeName>
        <fullName evidence="1">UDP-N-acetylglucosamine enolpyruvyl transferase</fullName>
        <shortName evidence="1">EPT</shortName>
    </alternativeName>
</protein>
<reference key="1">
    <citation type="journal article" date="2014" name="Stand. Genomic Sci.">
        <title>Complete genome sequence of Anabaena variabilis ATCC 29413.</title>
        <authorList>
            <person name="Thiel T."/>
            <person name="Pratte B.S."/>
            <person name="Zhong J."/>
            <person name="Goodwin L."/>
            <person name="Copeland A."/>
            <person name="Lucas S."/>
            <person name="Han C."/>
            <person name="Pitluck S."/>
            <person name="Land M.L."/>
            <person name="Kyrpides N.C."/>
            <person name="Woyke T."/>
        </authorList>
    </citation>
    <scope>NUCLEOTIDE SEQUENCE [LARGE SCALE GENOMIC DNA]</scope>
    <source>
        <strain>ATCC 29413 / PCC 7937</strain>
    </source>
</reference>
<comment type="function">
    <text evidence="1">Cell wall formation. Adds enolpyruvyl to UDP-N-acetylglucosamine.</text>
</comment>
<comment type="catalytic activity">
    <reaction evidence="1">
        <text>phosphoenolpyruvate + UDP-N-acetyl-alpha-D-glucosamine = UDP-N-acetyl-3-O-(1-carboxyvinyl)-alpha-D-glucosamine + phosphate</text>
        <dbReference type="Rhea" id="RHEA:18681"/>
        <dbReference type="ChEBI" id="CHEBI:43474"/>
        <dbReference type="ChEBI" id="CHEBI:57705"/>
        <dbReference type="ChEBI" id="CHEBI:58702"/>
        <dbReference type="ChEBI" id="CHEBI:68483"/>
        <dbReference type="EC" id="2.5.1.7"/>
    </reaction>
</comment>
<comment type="pathway">
    <text evidence="1">Cell wall biogenesis; peptidoglycan biosynthesis.</text>
</comment>
<comment type="subcellular location">
    <subcellularLocation>
        <location evidence="1">Cytoplasm</location>
    </subcellularLocation>
</comment>
<comment type="similarity">
    <text evidence="1">Belongs to the EPSP synthase family. MurA subfamily.</text>
</comment>
<proteinExistence type="inferred from homology"/>